<name>C3H57_ORYSJ</name>
<organism>
    <name type="scientific">Oryza sativa subsp. japonica</name>
    <name type="common">Rice</name>
    <dbReference type="NCBI Taxonomy" id="39947"/>
    <lineage>
        <taxon>Eukaryota</taxon>
        <taxon>Viridiplantae</taxon>
        <taxon>Streptophyta</taxon>
        <taxon>Embryophyta</taxon>
        <taxon>Tracheophyta</taxon>
        <taxon>Spermatophyta</taxon>
        <taxon>Magnoliopsida</taxon>
        <taxon>Liliopsida</taxon>
        <taxon>Poales</taxon>
        <taxon>Poaceae</taxon>
        <taxon>BOP clade</taxon>
        <taxon>Oryzoideae</taxon>
        <taxon>Oryzeae</taxon>
        <taxon>Oryzinae</taxon>
        <taxon>Oryza</taxon>
        <taxon>Oryza sativa</taxon>
    </lineage>
</organism>
<comment type="sequence caution" evidence="3">
    <conflict type="erroneous gene model prediction">
        <sequence resource="EMBL-CDS" id="BAD09680"/>
    </conflict>
</comment>
<comment type="sequence caution" evidence="3">
    <conflict type="erroneous gene model prediction">
        <sequence resource="EMBL-CDS" id="BAD10002"/>
    </conflict>
</comment>
<protein>
    <recommendedName>
        <fullName>Putative zinc finger CCCH domain-containing protein 57</fullName>
        <shortName>OsC3H57</shortName>
    </recommendedName>
</protein>
<gene>
    <name type="ordered locus">Os08g0491700</name>
    <name type="ordered locus">LOC_Os08g38370</name>
    <name type="ORF">OsJ_026654</name>
    <name type="ORF">P0605H02.48</name>
    <name type="ORF">P0686H11.8</name>
</gene>
<dbReference type="EMBL" id="AP004620">
    <property type="protein sequence ID" value="BAD09680.1"/>
    <property type="status" value="ALT_SEQ"/>
    <property type="molecule type" value="Genomic_DNA"/>
</dbReference>
<dbReference type="EMBL" id="AP004762">
    <property type="protein sequence ID" value="BAD10002.1"/>
    <property type="status" value="ALT_SEQ"/>
    <property type="molecule type" value="Genomic_DNA"/>
</dbReference>
<dbReference type="EMBL" id="AP014964">
    <property type="status" value="NOT_ANNOTATED_CDS"/>
    <property type="molecule type" value="Genomic_DNA"/>
</dbReference>
<dbReference type="EMBL" id="CM000145">
    <property type="protein sequence ID" value="EAZ43171.1"/>
    <property type="molecule type" value="Genomic_DNA"/>
</dbReference>
<dbReference type="STRING" id="39947.A3BUD2"/>
<dbReference type="PaxDb" id="39947-A3BUD2"/>
<dbReference type="eggNOG" id="KOG1677">
    <property type="taxonomic scope" value="Eukaryota"/>
</dbReference>
<dbReference type="HOGENOM" id="CLU_450264_0_0_1"/>
<dbReference type="InParanoid" id="A3BUD2"/>
<dbReference type="Proteomes" id="UP000000763">
    <property type="component" value="Chromosome 8"/>
</dbReference>
<dbReference type="Proteomes" id="UP000007752">
    <property type="component" value="Chromosome 8"/>
</dbReference>
<dbReference type="Proteomes" id="UP000059680">
    <property type="component" value="Chromosome 8"/>
</dbReference>
<dbReference type="GO" id="GO:0003677">
    <property type="term" value="F:DNA binding"/>
    <property type="evidence" value="ECO:0007669"/>
    <property type="project" value="UniProtKB-KW"/>
</dbReference>
<dbReference type="GO" id="GO:0003729">
    <property type="term" value="F:mRNA binding"/>
    <property type="evidence" value="ECO:0007669"/>
    <property type="project" value="InterPro"/>
</dbReference>
<dbReference type="GO" id="GO:0008270">
    <property type="term" value="F:zinc ion binding"/>
    <property type="evidence" value="ECO:0007669"/>
    <property type="project" value="UniProtKB-KW"/>
</dbReference>
<dbReference type="Gene3D" id="3.30.1370.210">
    <property type="match status" value="1"/>
</dbReference>
<dbReference type="InterPro" id="IPR045877">
    <property type="entry name" value="ZFP36-like"/>
</dbReference>
<dbReference type="InterPro" id="IPR000571">
    <property type="entry name" value="Znf_CCCH"/>
</dbReference>
<dbReference type="InterPro" id="IPR036855">
    <property type="entry name" value="Znf_CCCH_sf"/>
</dbReference>
<dbReference type="PANTHER" id="PTHR12547">
    <property type="entry name" value="CCCH ZINC FINGER/TIS11-RELATED"/>
    <property type="match status" value="1"/>
</dbReference>
<dbReference type="PANTHER" id="PTHR12547:SF150">
    <property type="entry name" value="ZINC FINGER CCCH DOMAIN-CONTAINING PROTEIN 47"/>
    <property type="match status" value="1"/>
</dbReference>
<dbReference type="Pfam" id="PF00642">
    <property type="entry name" value="zf-CCCH"/>
    <property type="match status" value="1"/>
</dbReference>
<dbReference type="SMART" id="SM00356">
    <property type="entry name" value="ZnF_C3H1"/>
    <property type="match status" value="2"/>
</dbReference>
<dbReference type="SUPFAM" id="SSF90229">
    <property type="entry name" value="CCCH zinc finger"/>
    <property type="match status" value="2"/>
</dbReference>
<dbReference type="PROSITE" id="PS50103">
    <property type="entry name" value="ZF_C3H1"/>
    <property type="match status" value="2"/>
</dbReference>
<evidence type="ECO:0000255" key="1">
    <source>
        <dbReference type="PROSITE-ProRule" id="PRU00723"/>
    </source>
</evidence>
<evidence type="ECO:0000256" key="2">
    <source>
        <dbReference type="SAM" id="MobiDB-lite"/>
    </source>
</evidence>
<evidence type="ECO:0000305" key="3"/>
<accession>A3BUD2</accession>
<accession>Q6Z8U9</accession>
<keyword id="KW-0238">DNA-binding</keyword>
<keyword id="KW-0479">Metal-binding</keyword>
<keyword id="KW-1185">Reference proteome</keyword>
<keyword id="KW-0677">Repeat</keyword>
<keyword id="KW-0862">Zinc</keyword>
<keyword id="KW-0863">Zinc-finger</keyword>
<sequence>MADMKQEEDELAVDPGVGAVCDPVTKLRFEAIVCLLDRIPITLQQIDMFGQDVAFRTKRIGNIEALLDFLKGSAAATWGARAGAGEPIDASSPELHRLVEDAETAYRDVRGLQPRMVVQMPRVFHKVCLPKLHQLLVIARRLLAQNVALRRLLLQPVGCDVSPMALAEAAVSSDDFERHGRNKVVIDEFGYEDLLRRRHTGHESQNDADDAEQHGREVREGEYEDLILMRHRDTSHELLQDDARRRRADAEAEQQGGDGEVRDEYEDYLCRQLGAVYSGPDQIYEHDMRGPEPAHSPNTPDQIYVPCERMLPYPSNCDNAEDRIHMACLALKNLVKDMEGIYSPRGTLWQYLEDVISLAHALFLENTKLHRFTDQASHQDLPLQPPQGFPFQQQPQHDGYQQPGVPFQQPQQGGYYGHGQGIMFQRGGYLQDVPFQHWQWQQGGYGQGFMFPQAQHQGGYGQGFLSEQPLPGDPSFMNMQAPYDGDGGVLFQKPQHYHHGHVPSEKGAIQAKGKQKMREPKTVMCPDWCRTGHCSSGDGCEYAHSQDELRVIDARPKYRTEPCRYWLAGKGCWYGDKCRYKQHRLAREPLYVDPFLTGHELRNKT</sequence>
<feature type="chain" id="PRO_0000346850" description="Putative zinc finger CCCH domain-containing protein 57">
    <location>
        <begin position="1"/>
        <end position="605"/>
    </location>
</feature>
<feature type="zinc finger region" description="C3H1-type 1" evidence="1">
    <location>
        <begin position="519"/>
        <end position="547"/>
    </location>
</feature>
<feature type="zinc finger region" description="C3H1-type 2" evidence="1">
    <location>
        <begin position="557"/>
        <end position="585"/>
    </location>
</feature>
<feature type="region of interest" description="Disordered" evidence="2">
    <location>
        <begin position="198"/>
        <end position="218"/>
    </location>
</feature>
<feature type="region of interest" description="Disordered" evidence="2">
    <location>
        <begin position="238"/>
        <end position="261"/>
    </location>
</feature>
<feature type="region of interest" description="Disordered" evidence="2">
    <location>
        <begin position="375"/>
        <end position="403"/>
    </location>
</feature>
<feature type="compositionally biased region" description="Basic and acidic residues" evidence="2">
    <location>
        <begin position="201"/>
        <end position="218"/>
    </location>
</feature>
<feature type="compositionally biased region" description="Basic and acidic residues" evidence="2">
    <location>
        <begin position="238"/>
        <end position="250"/>
    </location>
</feature>
<feature type="compositionally biased region" description="Low complexity" evidence="2">
    <location>
        <begin position="389"/>
        <end position="403"/>
    </location>
</feature>
<proteinExistence type="predicted"/>
<reference key="1">
    <citation type="journal article" date="2005" name="Nature">
        <title>The map-based sequence of the rice genome.</title>
        <authorList>
            <consortium name="International rice genome sequencing project (IRGSP)"/>
        </authorList>
    </citation>
    <scope>NUCLEOTIDE SEQUENCE [LARGE SCALE GENOMIC DNA]</scope>
    <source>
        <strain>cv. Nipponbare</strain>
    </source>
</reference>
<reference key="2">
    <citation type="journal article" date="2013" name="Rice">
        <title>Improvement of the Oryza sativa Nipponbare reference genome using next generation sequence and optical map data.</title>
        <authorList>
            <person name="Kawahara Y."/>
            <person name="de la Bastide M."/>
            <person name="Hamilton J.P."/>
            <person name="Kanamori H."/>
            <person name="McCombie W.R."/>
            <person name="Ouyang S."/>
            <person name="Schwartz D.C."/>
            <person name="Tanaka T."/>
            <person name="Wu J."/>
            <person name="Zhou S."/>
            <person name="Childs K.L."/>
            <person name="Davidson R.M."/>
            <person name="Lin H."/>
            <person name="Quesada-Ocampo L."/>
            <person name="Vaillancourt B."/>
            <person name="Sakai H."/>
            <person name="Lee S.S."/>
            <person name="Kim J."/>
            <person name="Numa H."/>
            <person name="Itoh T."/>
            <person name="Buell C.R."/>
            <person name="Matsumoto T."/>
        </authorList>
    </citation>
    <scope>GENOME REANNOTATION</scope>
    <source>
        <strain>cv. Nipponbare</strain>
    </source>
</reference>
<reference key="3">
    <citation type="journal article" date="2005" name="PLoS Biol.">
        <title>The genomes of Oryza sativa: a history of duplications.</title>
        <authorList>
            <person name="Yu J."/>
            <person name="Wang J."/>
            <person name="Lin W."/>
            <person name="Li S."/>
            <person name="Li H."/>
            <person name="Zhou J."/>
            <person name="Ni P."/>
            <person name="Dong W."/>
            <person name="Hu S."/>
            <person name="Zeng C."/>
            <person name="Zhang J."/>
            <person name="Zhang Y."/>
            <person name="Li R."/>
            <person name="Xu Z."/>
            <person name="Li S."/>
            <person name="Li X."/>
            <person name="Zheng H."/>
            <person name="Cong L."/>
            <person name="Lin L."/>
            <person name="Yin J."/>
            <person name="Geng J."/>
            <person name="Li G."/>
            <person name="Shi J."/>
            <person name="Liu J."/>
            <person name="Lv H."/>
            <person name="Li J."/>
            <person name="Wang J."/>
            <person name="Deng Y."/>
            <person name="Ran L."/>
            <person name="Shi X."/>
            <person name="Wang X."/>
            <person name="Wu Q."/>
            <person name="Li C."/>
            <person name="Ren X."/>
            <person name="Wang J."/>
            <person name="Wang X."/>
            <person name="Li D."/>
            <person name="Liu D."/>
            <person name="Zhang X."/>
            <person name="Ji Z."/>
            <person name="Zhao W."/>
            <person name="Sun Y."/>
            <person name="Zhang Z."/>
            <person name="Bao J."/>
            <person name="Han Y."/>
            <person name="Dong L."/>
            <person name="Ji J."/>
            <person name="Chen P."/>
            <person name="Wu S."/>
            <person name="Liu J."/>
            <person name="Xiao Y."/>
            <person name="Bu D."/>
            <person name="Tan J."/>
            <person name="Yang L."/>
            <person name="Ye C."/>
            <person name="Zhang J."/>
            <person name="Xu J."/>
            <person name="Zhou Y."/>
            <person name="Yu Y."/>
            <person name="Zhang B."/>
            <person name="Zhuang S."/>
            <person name="Wei H."/>
            <person name="Liu B."/>
            <person name="Lei M."/>
            <person name="Yu H."/>
            <person name="Li Y."/>
            <person name="Xu H."/>
            <person name="Wei S."/>
            <person name="He X."/>
            <person name="Fang L."/>
            <person name="Zhang Z."/>
            <person name="Zhang Y."/>
            <person name="Huang X."/>
            <person name="Su Z."/>
            <person name="Tong W."/>
            <person name="Li J."/>
            <person name="Tong Z."/>
            <person name="Li S."/>
            <person name="Ye J."/>
            <person name="Wang L."/>
            <person name="Fang L."/>
            <person name="Lei T."/>
            <person name="Chen C.-S."/>
            <person name="Chen H.-C."/>
            <person name="Xu Z."/>
            <person name="Li H."/>
            <person name="Huang H."/>
            <person name="Zhang F."/>
            <person name="Xu H."/>
            <person name="Li N."/>
            <person name="Zhao C."/>
            <person name="Li S."/>
            <person name="Dong L."/>
            <person name="Huang Y."/>
            <person name="Li L."/>
            <person name="Xi Y."/>
            <person name="Qi Q."/>
            <person name="Li W."/>
            <person name="Zhang B."/>
            <person name="Hu W."/>
            <person name="Zhang Y."/>
            <person name="Tian X."/>
            <person name="Jiao Y."/>
            <person name="Liang X."/>
            <person name="Jin J."/>
            <person name="Gao L."/>
            <person name="Zheng W."/>
            <person name="Hao B."/>
            <person name="Liu S.-M."/>
            <person name="Wang W."/>
            <person name="Yuan L."/>
            <person name="Cao M."/>
            <person name="McDermott J."/>
            <person name="Samudrala R."/>
            <person name="Wang J."/>
            <person name="Wong G.K.-S."/>
            <person name="Yang H."/>
        </authorList>
    </citation>
    <scope>NUCLEOTIDE SEQUENCE [LARGE SCALE GENOMIC DNA]</scope>
    <source>
        <strain>cv. Nipponbare</strain>
    </source>
</reference>
<reference key="4">
    <citation type="journal article" date="2008" name="BMC Genomics">
        <title>Genome-wide analysis of CCCH zinc finger family in Arabidopsis and rice.</title>
        <authorList>
            <person name="Wang D."/>
            <person name="Guo Y."/>
            <person name="Wu C."/>
            <person name="Yang G."/>
            <person name="Li Y."/>
            <person name="Zheng C."/>
        </authorList>
    </citation>
    <scope>NOMENCLATURE</scope>
</reference>